<accession>Q9ZQA4</accession>
<sequence length="333" mass="37067">MLFFILFLSIISPIESVDQRIHHPSKCDHLSKFPTKGFTMVLKVSLNGCGRFKRVQDAIDASIGSSQSKTLILIDFGIYRERFIVHENKNNLVVQGMGYSRTSIEWNNTTASSNGTFSSFSVAVFGEKFTAYNISFKNTAPAPNPGAVDAQAVALKVVGDKAAFYGCGFYGNQDTLLDQEGRHFFKGCFIEGSIDFIFGNGRSLYEDCTLHSIAKENTIGCITANGKDTLKDRTGFVFVNCKITGSARVWLGRAWRPYARVIFSKTYMSRVVSLDGWNDMGDPKTQRTVYYGEHRCYGPGANHSKRVTYAKLLSDVEAAPFTNISFIDGEEWL</sequence>
<proteinExistence type="evidence at transcript level"/>
<reference key="1">
    <citation type="journal article" date="1999" name="Nature">
        <title>Sequence and analysis of chromosome 2 of the plant Arabidopsis thaliana.</title>
        <authorList>
            <person name="Lin X."/>
            <person name="Kaul S."/>
            <person name="Rounsley S.D."/>
            <person name="Shea T.P."/>
            <person name="Benito M.-I."/>
            <person name="Town C.D."/>
            <person name="Fujii C.Y."/>
            <person name="Mason T.M."/>
            <person name="Bowman C.L."/>
            <person name="Barnstead M.E."/>
            <person name="Feldblyum T.V."/>
            <person name="Buell C.R."/>
            <person name="Ketchum K.A."/>
            <person name="Lee J.J."/>
            <person name="Ronning C.M."/>
            <person name="Koo H.L."/>
            <person name="Moffat K.S."/>
            <person name="Cronin L.A."/>
            <person name="Shen M."/>
            <person name="Pai G."/>
            <person name="Van Aken S."/>
            <person name="Umayam L."/>
            <person name="Tallon L.J."/>
            <person name="Gill J.E."/>
            <person name="Adams M.D."/>
            <person name="Carrera A.J."/>
            <person name="Creasy T.H."/>
            <person name="Goodman H.M."/>
            <person name="Somerville C.R."/>
            <person name="Copenhaver G.P."/>
            <person name="Preuss D."/>
            <person name="Nierman W.C."/>
            <person name="White O."/>
            <person name="Eisen J.A."/>
            <person name="Salzberg S.L."/>
            <person name="Fraser C.M."/>
            <person name="Venter J.C."/>
        </authorList>
    </citation>
    <scope>NUCLEOTIDE SEQUENCE [LARGE SCALE GENOMIC DNA]</scope>
    <source>
        <strain>cv. Columbia</strain>
    </source>
</reference>
<reference key="2">
    <citation type="journal article" date="2017" name="Plant J.">
        <title>Araport11: a complete reannotation of the Arabidopsis thaliana reference genome.</title>
        <authorList>
            <person name="Cheng C.Y."/>
            <person name="Krishnakumar V."/>
            <person name="Chan A.P."/>
            <person name="Thibaud-Nissen F."/>
            <person name="Schobel S."/>
            <person name="Town C.D."/>
        </authorList>
    </citation>
    <scope>GENOME REANNOTATION</scope>
    <source>
        <strain>cv. Columbia</strain>
    </source>
</reference>
<reference key="3">
    <citation type="journal article" date="2004" name="Carbohydr. Res.">
        <title>Pectin methylesterases: sequence-structural features and phylogenetic relationships.</title>
        <authorList>
            <person name="Markovic O."/>
            <person name="Janecek S."/>
        </authorList>
    </citation>
    <scope>GENE FAMILY</scope>
    <scope>NOMENCLATURE</scope>
</reference>
<reference key="4">
    <citation type="journal article" date="2006" name="Planta">
        <title>Comprehensive expression profiling of the pectin methylesterase gene family during silique development in Arabidopsis thaliana.</title>
        <authorList>
            <person name="Louvet R."/>
            <person name="Cavel E."/>
            <person name="Gutierrez L."/>
            <person name="Guenin S."/>
            <person name="Roger D."/>
            <person name="Gillet F."/>
            <person name="Guerineau F."/>
            <person name="Pelloux J."/>
        </authorList>
    </citation>
    <scope>TISSUE SPECIFICITY</scope>
</reference>
<evidence type="ECO:0000250" key="1"/>
<evidence type="ECO:0000255" key="2"/>
<evidence type="ECO:0000255" key="3">
    <source>
        <dbReference type="PROSITE-ProRule" id="PRU10040"/>
    </source>
</evidence>
<evidence type="ECO:0000269" key="4">
    <source>
    </source>
</evidence>
<evidence type="ECO:0000305" key="5"/>
<dbReference type="EC" id="3.1.1.11"/>
<dbReference type="EMBL" id="AC006282">
    <property type="protein sequence ID" value="AAD20146.1"/>
    <property type="molecule type" value="Genomic_DNA"/>
</dbReference>
<dbReference type="EMBL" id="CP002685">
    <property type="protein sequence ID" value="AEC09288.1"/>
    <property type="molecule type" value="Genomic_DNA"/>
</dbReference>
<dbReference type="PIR" id="F84783">
    <property type="entry name" value="F84783"/>
</dbReference>
<dbReference type="RefSeq" id="NP_181208.1">
    <property type="nucleotide sequence ID" value="NM_129225.1"/>
</dbReference>
<dbReference type="SMR" id="Q9ZQA4"/>
<dbReference type="FunCoup" id="Q9ZQA4">
    <property type="interactions" value="50"/>
</dbReference>
<dbReference type="STRING" id="3702.Q9ZQA4"/>
<dbReference type="GlyCosmos" id="Q9ZQA4">
    <property type="glycosylation" value="5 sites, No reported glycans"/>
</dbReference>
<dbReference type="GlyGen" id="Q9ZQA4">
    <property type="glycosylation" value="5 sites"/>
</dbReference>
<dbReference type="PaxDb" id="3702-AT2G36700.1"/>
<dbReference type="EnsemblPlants" id="AT2G36700.1">
    <property type="protein sequence ID" value="AT2G36700.1"/>
    <property type="gene ID" value="AT2G36700"/>
</dbReference>
<dbReference type="GeneID" id="818242"/>
<dbReference type="Gramene" id="AT2G36700.1">
    <property type="protein sequence ID" value="AT2G36700.1"/>
    <property type="gene ID" value="AT2G36700"/>
</dbReference>
<dbReference type="KEGG" id="ath:AT2G36700"/>
<dbReference type="Araport" id="AT2G36700"/>
<dbReference type="TAIR" id="AT2G36700"/>
<dbReference type="eggNOG" id="ENOG502QUTX">
    <property type="taxonomic scope" value="Eukaryota"/>
</dbReference>
<dbReference type="HOGENOM" id="CLU_012243_3_3_1"/>
<dbReference type="InParanoid" id="Q9ZQA4"/>
<dbReference type="OMA" id="NTIGCIT"/>
<dbReference type="PhylomeDB" id="Q9ZQA4"/>
<dbReference type="BioCyc" id="ARA:AT2G36700-MONOMER"/>
<dbReference type="UniPathway" id="UPA00545">
    <property type="reaction ID" value="UER00823"/>
</dbReference>
<dbReference type="PRO" id="PR:Q9ZQA4"/>
<dbReference type="Proteomes" id="UP000006548">
    <property type="component" value="Chromosome 2"/>
</dbReference>
<dbReference type="ExpressionAtlas" id="Q9ZQA4">
    <property type="expression patterns" value="differential"/>
</dbReference>
<dbReference type="GO" id="GO:0005576">
    <property type="term" value="C:extracellular region"/>
    <property type="evidence" value="ECO:0007669"/>
    <property type="project" value="UniProtKB-KW"/>
</dbReference>
<dbReference type="GO" id="GO:0030599">
    <property type="term" value="F:pectinesterase activity"/>
    <property type="evidence" value="ECO:0007669"/>
    <property type="project" value="UniProtKB-EC"/>
</dbReference>
<dbReference type="GO" id="GO:0042545">
    <property type="term" value="P:cell wall modification"/>
    <property type="evidence" value="ECO:0007669"/>
    <property type="project" value="InterPro"/>
</dbReference>
<dbReference type="GO" id="GO:0045490">
    <property type="term" value="P:pectin catabolic process"/>
    <property type="evidence" value="ECO:0007669"/>
    <property type="project" value="UniProtKB-UniPathway"/>
</dbReference>
<dbReference type="FunFam" id="2.160.20.10:FF:000013">
    <property type="entry name" value="Pectinesterase"/>
    <property type="match status" value="1"/>
</dbReference>
<dbReference type="Gene3D" id="2.160.20.10">
    <property type="entry name" value="Single-stranded right-handed beta-helix, Pectin lyase-like"/>
    <property type="match status" value="1"/>
</dbReference>
<dbReference type="InterPro" id="IPR012334">
    <property type="entry name" value="Pectin_lyas_fold"/>
</dbReference>
<dbReference type="InterPro" id="IPR011050">
    <property type="entry name" value="Pectin_lyase_fold/virulence"/>
</dbReference>
<dbReference type="InterPro" id="IPR033131">
    <property type="entry name" value="Pectinesterase_Asp_AS"/>
</dbReference>
<dbReference type="InterPro" id="IPR000070">
    <property type="entry name" value="Pectinesterase_cat"/>
</dbReference>
<dbReference type="PANTHER" id="PTHR31321">
    <property type="entry name" value="ACYL-COA THIOESTER HYDROLASE YBHC-RELATED"/>
    <property type="match status" value="1"/>
</dbReference>
<dbReference type="PANTHER" id="PTHR31321:SF73">
    <property type="entry name" value="PECTINESTERASE 14-RELATED"/>
    <property type="match status" value="1"/>
</dbReference>
<dbReference type="Pfam" id="PF01095">
    <property type="entry name" value="Pectinesterase"/>
    <property type="match status" value="1"/>
</dbReference>
<dbReference type="SUPFAM" id="SSF51126">
    <property type="entry name" value="Pectin lyase-like"/>
    <property type="match status" value="1"/>
</dbReference>
<dbReference type="PROSITE" id="PS00503">
    <property type="entry name" value="PECTINESTERASE_2"/>
    <property type="match status" value="1"/>
</dbReference>
<gene>
    <name type="primary">PME14</name>
    <name type="synonym">ARATH14</name>
    <name type="ordered locus">At2g36700</name>
    <name type="ORF">F13K3.10</name>
</gene>
<protein>
    <recommendedName>
        <fullName>Putative pectinesterase 14</fullName>
        <shortName>PE 14</shortName>
        <ecNumber>3.1.1.11</ecNumber>
    </recommendedName>
    <alternativeName>
        <fullName>Pectin methylesterase 14</fullName>
        <shortName>AtPME14</shortName>
    </alternativeName>
</protein>
<organism>
    <name type="scientific">Arabidopsis thaliana</name>
    <name type="common">Mouse-ear cress</name>
    <dbReference type="NCBI Taxonomy" id="3702"/>
    <lineage>
        <taxon>Eukaryota</taxon>
        <taxon>Viridiplantae</taxon>
        <taxon>Streptophyta</taxon>
        <taxon>Embryophyta</taxon>
        <taxon>Tracheophyta</taxon>
        <taxon>Spermatophyta</taxon>
        <taxon>Magnoliopsida</taxon>
        <taxon>eudicotyledons</taxon>
        <taxon>Gunneridae</taxon>
        <taxon>Pentapetalae</taxon>
        <taxon>rosids</taxon>
        <taxon>malvids</taxon>
        <taxon>Brassicales</taxon>
        <taxon>Brassicaceae</taxon>
        <taxon>Camelineae</taxon>
        <taxon>Arabidopsis</taxon>
    </lineage>
</organism>
<feature type="signal peptide" evidence="2">
    <location>
        <begin position="1"/>
        <end position="16"/>
    </location>
</feature>
<feature type="chain" id="PRO_0000371671" description="Putative pectinesterase 14">
    <location>
        <begin position="17"/>
        <end position="333"/>
    </location>
</feature>
<feature type="active site" description="Proton donor" evidence="3">
    <location>
        <position position="174"/>
    </location>
</feature>
<feature type="active site" description="Nucleophile" evidence="3">
    <location>
        <position position="195"/>
    </location>
</feature>
<feature type="binding site" evidence="1">
    <location>
        <position position="116"/>
    </location>
    <ligand>
        <name>substrate</name>
    </ligand>
</feature>
<feature type="binding site" evidence="1">
    <location>
        <position position="151"/>
    </location>
    <ligand>
        <name>substrate</name>
    </ligand>
</feature>
<feature type="binding site" evidence="1">
    <location>
        <position position="253"/>
    </location>
    <ligand>
        <name>substrate</name>
    </ligand>
</feature>
<feature type="site" description="Transition state stabilizer" evidence="1">
    <location>
        <position position="173"/>
    </location>
</feature>
<feature type="glycosylation site" description="N-linked (GlcNAc...) asparagine" evidence="2">
    <location>
        <position position="108"/>
    </location>
</feature>
<feature type="glycosylation site" description="N-linked (GlcNAc...) asparagine" evidence="2">
    <location>
        <position position="114"/>
    </location>
</feature>
<feature type="glycosylation site" description="N-linked (GlcNAc...) asparagine" evidence="2">
    <location>
        <position position="133"/>
    </location>
</feature>
<feature type="glycosylation site" description="N-linked (GlcNAc...) asparagine" evidence="2">
    <location>
        <position position="302"/>
    </location>
</feature>
<feature type="glycosylation site" description="N-linked (GlcNAc...) asparagine" evidence="2">
    <location>
        <position position="323"/>
    </location>
</feature>
<keyword id="KW-0063">Aspartyl esterase</keyword>
<keyword id="KW-0134">Cell wall</keyword>
<keyword id="KW-0961">Cell wall biogenesis/degradation</keyword>
<keyword id="KW-0325">Glycoprotein</keyword>
<keyword id="KW-0378">Hydrolase</keyword>
<keyword id="KW-1185">Reference proteome</keyword>
<keyword id="KW-0964">Secreted</keyword>
<keyword id="KW-0732">Signal</keyword>
<comment type="function">
    <text evidence="1">Acts in the modification of cell walls via demethylesterification of cell wall pectin.</text>
</comment>
<comment type="catalytic activity">
    <reaction>
        <text>[(1-&gt;4)-alpha-D-galacturonosyl methyl ester](n) + n H2O = [(1-&gt;4)-alpha-D-galacturonosyl](n) + n methanol + n H(+)</text>
        <dbReference type="Rhea" id="RHEA:22380"/>
        <dbReference type="Rhea" id="RHEA-COMP:14570"/>
        <dbReference type="Rhea" id="RHEA-COMP:14573"/>
        <dbReference type="ChEBI" id="CHEBI:15377"/>
        <dbReference type="ChEBI" id="CHEBI:15378"/>
        <dbReference type="ChEBI" id="CHEBI:17790"/>
        <dbReference type="ChEBI" id="CHEBI:140522"/>
        <dbReference type="ChEBI" id="CHEBI:140523"/>
        <dbReference type="EC" id="3.1.1.11"/>
    </reaction>
</comment>
<comment type="pathway">
    <text>Glycan metabolism; pectin degradation; 2-dehydro-3-deoxy-D-gluconate from pectin: step 1/5.</text>
</comment>
<comment type="subcellular location">
    <subcellularLocation>
        <location evidence="1">Secreted</location>
        <location evidence="1">Cell wall</location>
    </subcellularLocation>
</comment>
<comment type="tissue specificity">
    <text evidence="4">Expressed in flower buds.</text>
</comment>
<comment type="similarity">
    <text evidence="5">Belongs to the pectinesterase family.</text>
</comment>
<name>PME14_ARATH</name>